<reference key="1">
    <citation type="submission" date="2008-02" db="EMBL/GenBank/DDBJ databases">
        <title>Complete sequence of Yersinia pseudotuberculosis YPIII.</title>
        <authorList>
            <consortium name="US DOE Joint Genome Institute"/>
            <person name="Copeland A."/>
            <person name="Lucas S."/>
            <person name="Lapidus A."/>
            <person name="Glavina del Rio T."/>
            <person name="Dalin E."/>
            <person name="Tice H."/>
            <person name="Bruce D."/>
            <person name="Goodwin L."/>
            <person name="Pitluck S."/>
            <person name="Munk A.C."/>
            <person name="Brettin T."/>
            <person name="Detter J.C."/>
            <person name="Han C."/>
            <person name="Tapia R."/>
            <person name="Schmutz J."/>
            <person name="Larimer F."/>
            <person name="Land M."/>
            <person name="Hauser L."/>
            <person name="Challacombe J.F."/>
            <person name="Green L."/>
            <person name="Lindler L.E."/>
            <person name="Nikolich M.P."/>
            <person name="Richardson P."/>
        </authorList>
    </citation>
    <scope>NUCLEOTIDE SEQUENCE [LARGE SCALE GENOMIC DNA]</scope>
    <source>
        <strain>YPIII</strain>
    </source>
</reference>
<evidence type="ECO:0000255" key="1">
    <source>
        <dbReference type="HAMAP-Rule" id="MF_01577"/>
    </source>
</evidence>
<proteinExistence type="inferred from homology"/>
<accession>B1JSD2</accession>
<gene>
    <name evidence="1" type="primary">mdtD</name>
    <name type="ordered locus">YPK_1329</name>
</gene>
<keyword id="KW-0997">Cell inner membrane</keyword>
<keyword id="KW-1003">Cell membrane</keyword>
<keyword id="KW-0472">Membrane</keyword>
<keyword id="KW-0812">Transmembrane</keyword>
<keyword id="KW-1133">Transmembrane helix</keyword>
<keyword id="KW-0813">Transport</keyword>
<feature type="chain" id="PRO_0000365295" description="Putative multidrug resistance protein MdtD">
    <location>
        <begin position="1"/>
        <end position="465"/>
    </location>
</feature>
<feature type="transmembrane region" description="Helical" evidence="1">
    <location>
        <begin position="12"/>
        <end position="32"/>
    </location>
</feature>
<feature type="transmembrane region" description="Helical" evidence="1">
    <location>
        <begin position="49"/>
        <end position="69"/>
    </location>
</feature>
<feature type="transmembrane region" description="Helical" evidence="1">
    <location>
        <begin position="72"/>
        <end position="92"/>
    </location>
</feature>
<feature type="transmembrane region" description="Helical" evidence="1">
    <location>
        <begin position="102"/>
        <end position="124"/>
    </location>
</feature>
<feature type="transmembrane region" description="Helical" evidence="1">
    <location>
        <begin position="138"/>
        <end position="158"/>
    </location>
</feature>
<feature type="transmembrane region" description="Helical" evidence="1">
    <location>
        <begin position="165"/>
        <end position="185"/>
    </location>
</feature>
<feature type="transmembrane region" description="Helical" evidence="1">
    <location>
        <begin position="195"/>
        <end position="215"/>
    </location>
</feature>
<feature type="transmembrane region" description="Helical" evidence="1">
    <location>
        <begin position="219"/>
        <end position="239"/>
    </location>
</feature>
<feature type="transmembrane region" description="Helical" evidence="1">
    <location>
        <begin position="267"/>
        <end position="287"/>
    </location>
</feature>
<feature type="transmembrane region" description="Helical" evidence="1">
    <location>
        <begin position="290"/>
        <end position="310"/>
    </location>
</feature>
<feature type="transmembrane region" description="Helical" evidence="1">
    <location>
        <begin position="342"/>
        <end position="362"/>
    </location>
</feature>
<feature type="transmembrane region" description="Helical" evidence="1">
    <location>
        <begin position="393"/>
        <end position="413"/>
    </location>
</feature>
<feature type="transmembrane region" description="Helical" evidence="1">
    <location>
        <begin position="430"/>
        <end position="450"/>
    </location>
</feature>
<organism>
    <name type="scientific">Yersinia pseudotuberculosis serotype O:3 (strain YPIII)</name>
    <dbReference type="NCBI Taxonomy" id="502800"/>
    <lineage>
        <taxon>Bacteria</taxon>
        <taxon>Pseudomonadati</taxon>
        <taxon>Pseudomonadota</taxon>
        <taxon>Gammaproteobacteria</taxon>
        <taxon>Enterobacterales</taxon>
        <taxon>Yersiniaceae</taxon>
        <taxon>Yersinia</taxon>
    </lineage>
</organism>
<protein>
    <recommendedName>
        <fullName evidence="1">Putative multidrug resistance protein MdtD</fullName>
    </recommendedName>
</protein>
<comment type="subcellular location">
    <subcellularLocation>
        <location evidence="1">Cell inner membrane</location>
        <topology evidence="1">Multi-pass membrane protein</topology>
    </subcellularLocation>
</comment>
<comment type="similarity">
    <text evidence="1">Belongs to the major facilitator superfamily. TCR/Tet family.</text>
</comment>
<dbReference type="EMBL" id="CP000950">
    <property type="protein sequence ID" value="ACA67623.1"/>
    <property type="molecule type" value="Genomic_DNA"/>
</dbReference>
<dbReference type="RefSeq" id="WP_002209795.1">
    <property type="nucleotide sequence ID" value="NZ_CP009792.1"/>
</dbReference>
<dbReference type="SMR" id="B1JSD2"/>
<dbReference type="KEGG" id="ypy:YPK_1329"/>
<dbReference type="PATRIC" id="fig|502800.11.peg.1964"/>
<dbReference type="GO" id="GO:0005886">
    <property type="term" value="C:plasma membrane"/>
    <property type="evidence" value="ECO:0007669"/>
    <property type="project" value="UniProtKB-SubCell"/>
</dbReference>
<dbReference type="GO" id="GO:0022857">
    <property type="term" value="F:transmembrane transporter activity"/>
    <property type="evidence" value="ECO:0007669"/>
    <property type="project" value="UniProtKB-UniRule"/>
</dbReference>
<dbReference type="CDD" id="cd17503">
    <property type="entry name" value="MFS_LmrB_MDR_like"/>
    <property type="match status" value="1"/>
</dbReference>
<dbReference type="FunFam" id="1.20.1250.20:FF:000021">
    <property type="entry name" value="Putative multidrug resistance protein MdtD"/>
    <property type="match status" value="1"/>
</dbReference>
<dbReference type="FunFam" id="1.20.1720.10:FF:000001">
    <property type="entry name" value="Putative multidrug resistance protein MdtD"/>
    <property type="match status" value="1"/>
</dbReference>
<dbReference type="Gene3D" id="1.20.1250.20">
    <property type="entry name" value="MFS general substrate transporter like domains"/>
    <property type="match status" value="1"/>
</dbReference>
<dbReference type="Gene3D" id="1.20.1720.10">
    <property type="entry name" value="Multidrug resistance protein D"/>
    <property type="match status" value="1"/>
</dbReference>
<dbReference type="HAMAP" id="MF_01577">
    <property type="entry name" value="MFS_MdtD"/>
    <property type="match status" value="1"/>
</dbReference>
<dbReference type="InterPro" id="IPR004638">
    <property type="entry name" value="EmrB-like"/>
</dbReference>
<dbReference type="InterPro" id="IPR011701">
    <property type="entry name" value="MFS"/>
</dbReference>
<dbReference type="InterPro" id="IPR020846">
    <property type="entry name" value="MFS_dom"/>
</dbReference>
<dbReference type="InterPro" id="IPR036259">
    <property type="entry name" value="MFS_trans_sf"/>
</dbReference>
<dbReference type="InterPro" id="IPR023721">
    <property type="entry name" value="Multi-R_MdtD"/>
</dbReference>
<dbReference type="NCBIfam" id="TIGR00711">
    <property type="entry name" value="efflux_EmrB"/>
    <property type="match status" value="1"/>
</dbReference>
<dbReference type="NCBIfam" id="NF007799">
    <property type="entry name" value="PRK10504.1"/>
    <property type="match status" value="1"/>
</dbReference>
<dbReference type="PANTHER" id="PTHR42718:SF46">
    <property type="entry name" value="BLR6921 PROTEIN"/>
    <property type="match status" value="1"/>
</dbReference>
<dbReference type="PANTHER" id="PTHR42718">
    <property type="entry name" value="MAJOR FACILITATOR SUPERFAMILY MULTIDRUG TRANSPORTER MFSC"/>
    <property type="match status" value="1"/>
</dbReference>
<dbReference type="Pfam" id="PF07690">
    <property type="entry name" value="MFS_1"/>
    <property type="match status" value="1"/>
</dbReference>
<dbReference type="PRINTS" id="PR01036">
    <property type="entry name" value="TCRTETB"/>
</dbReference>
<dbReference type="SUPFAM" id="SSF103473">
    <property type="entry name" value="MFS general substrate transporter"/>
    <property type="match status" value="1"/>
</dbReference>
<dbReference type="PROSITE" id="PS50850">
    <property type="entry name" value="MFS"/>
    <property type="match status" value="1"/>
</dbReference>
<name>MDTD_YERPY</name>
<sequence>MVTQATSVRWQLWIVAFGFFMQTLDTTIVNTALPSIAASLGENPLRMQSVIVSYVLTVAVMLPASGWLADRIGVKWVFFSAIILFTFGSLMCAQSATLNELILSRVLQGVGGAMMVPVGRLTVMKIVPREQYMAAMAFVTLPGQIGPLVGPALGGFLVEFASWHWIFLINLPVGVIGALATLLLMPNHKMSTRRFDISGFIMLAIGMATLTLALDGHTGLGLSPLAIAGLILCGVIALGSYWWHALGNRFALFSLHLFKNKIYTLGLVGSMSARIGSGMLPFMTPIFLQIGLGFSPFHAGLMMIPMIIGSMGMKRIIVQVVNRFGYRRVLVNATLLLAVVSLSLPLVAIMGWTLLMPVVLFFQGMLNALRFSTMNTLTLKTLPDRLASSGNSLLSMAMQLSMSIGVSTAGILLGTFAHHQVATNTPATHSAFLYSYLCMAIIIALPALIFNRVPPDTGANRHLAR</sequence>